<comment type="sequence caution" evidence="2">
    <conflict type="erroneous initiation">
        <sequence resource="EMBL-CDS" id="AAB98809"/>
    </conflict>
</comment>
<organism>
    <name type="scientific">Methanocaldococcus jannaschii (strain ATCC 43067 / DSM 2661 / JAL-1 / JCM 10045 / NBRC 100440)</name>
    <name type="common">Methanococcus jannaschii</name>
    <dbReference type="NCBI Taxonomy" id="243232"/>
    <lineage>
        <taxon>Archaea</taxon>
        <taxon>Methanobacteriati</taxon>
        <taxon>Methanobacteriota</taxon>
        <taxon>Methanomada group</taxon>
        <taxon>Methanococci</taxon>
        <taxon>Methanococcales</taxon>
        <taxon>Methanocaldococcaceae</taxon>
        <taxon>Methanocaldococcus</taxon>
    </lineage>
</organism>
<feature type="chain" id="PRO_0000142377" description="Protein MJ0810">
    <location>
        <begin position="1"/>
        <end position="201"/>
    </location>
</feature>
<feature type="domain" description="AMMECR1" evidence="1">
    <location>
        <begin position="7"/>
        <end position="197"/>
    </location>
</feature>
<keyword id="KW-1185">Reference proteome</keyword>
<gene>
    <name type="ordered locus">MJ0810</name>
</gene>
<sequence length="201" mass="22936">MRLLTLEEGTFAVRYARAVIENYLAGKKIVIESYPEVFNEKRGCFCTLHTYPDKELRGCIGIPEPIMPLIEALEEAAISAATKDPRFPPVTLEEMDSIVVEVSILTPPELIKVNHPKEYLEKIKIGRDGLIIEYGFYRGLLLPQVPVEYGWDVEEYLAHLCLKAGLPPDMWLAEGVKIYRFEAQIFEEVEPRGEVIEKKLL</sequence>
<dbReference type="EMBL" id="L77117">
    <property type="protein sequence ID" value="AAB98809.1"/>
    <property type="status" value="ALT_INIT"/>
    <property type="molecule type" value="Genomic_DNA"/>
</dbReference>
<dbReference type="PIR" id="B64401">
    <property type="entry name" value="B64401"/>
</dbReference>
<dbReference type="RefSeq" id="WP_064496635.1">
    <property type="nucleotide sequence ID" value="NC_000909.1"/>
</dbReference>
<dbReference type="SMR" id="Q58220"/>
<dbReference type="FunCoup" id="Q58220">
    <property type="interactions" value="83"/>
</dbReference>
<dbReference type="STRING" id="243232.MJ_0810"/>
<dbReference type="PaxDb" id="243232-MJ_0810"/>
<dbReference type="EnsemblBacteria" id="AAB98809">
    <property type="protein sequence ID" value="AAB98809"/>
    <property type="gene ID" value="MJ_0810"/>
</dbReference>
<dbReference type="GeneID" id="1451693"/>
<dbReference type="KEGG" id="mja:MJ_0810"/>
<dbReference type="eggNOG" id="arCOG01336">
    <property type="taxonomic scope" value="Archaea"/>
</dbReference>
<dbReference type="HOGENOM" id="CLU_095686_1_1_2"/>
<dbReference type="InParanoid" id="Q58220"/>
<dbReference type="OrthoDB" id="25187at2157"/>
<dbReference type="PhylomeDB" id="Q58220"/>
<dbReference type="Proteomes" id="UP000000805">
    <property type="component" value="Chromosome"/>
</dbReference>
<dbReference type="Gene3D" id="3.30.700.20">
    <property type="entry name" value="Hypothetical protein ph0010, domain 1"/>
    <property type="match status" value="1"/>
</dbReference>
<dbReference type="Gene3D" id="3.30.1490.150">
    <property type="entry name" value="Hypothetical protein ph0010, domain 2"/>
    <property type="match status" value="1"/>
</dbReference>
<dbReference type="HAMAP" id="MF_00645">
    <property type="entry name" value="AMMECR1"/>
    <property type="match status" value="1"/>
</dbReference>
<dbReference type="InterPro" id="IPR023473">
    <property type="entry name" value="AMMECR1"/>
</dbReference>
<dbReference type="InterPro" id="IPR036071">
    <property type="entry name" value="AMMECR1_dom_sf"/>
</dbReference>
<dbReference type="InterPro" id="IPR002733">
    <property type="entry name" value="AMMECR1_domain"/>
</dbReference>
<dbReference type="InterPro" id="IPR027485">
    <property type="entry name" value="AMMECR1_N"/>
</dbReference>
<dbReference type="InterPro" id="IPR027623">
    <property type="entry name" value="AmmeMemoSam_A"/>
</dbReference>
<dbReference type="InterPro" id="IPR023472">
    <property type="entry name" value="Uncharacterised_MJ0810"/>
</dbReference>
<dbReference type="NCBIfam" id="TIGR04335">
    <property type="entry name" value="AmmeMemoSam_A"/>
    <property type="match status" value="1"/>
</dbReference>
<dbReference type="NCBIfam" id="TIGR00296">
    <property type="entry name" value="TIGR00296 family protein"/>
    <property type="match status" value="1"/>
</dbReference>
<dbReference type="PANTHER" id="PTHR13016:SF0">
    <property type="entry name" value="AMME SYNDROME CANDIDATE GENE 1 PROTEIN"/>
    <property type="match status" value="1"/>
</dbReference>
<dbReference type="PANTHER" id="PTHR13016">
    <property type="entry name" value="AMMECR1 HOMOLOG"/>
    <property type="match status" value="1"/>
</dbReference>
<dbReference type="Pfam" id="PF01871">
    <property type="entry name" value="AMMECR1"/>
    <property type="match status" value="1"/>
</dbReference>
<dbReference type="SUPFAM" id="SSF143447">
    <property type="entry name" value="AMMECR1-like"/>
    <property type="match status" value="1"/>
</dbReference>
<dbReference type="PROSITE" id="PS51112">
    <property type="entry name" value="AMMECR1"/>
    <property type="match status" value="1"/>
</dbReference>
<protein>
    <recommendedName>
        <fullName evidence="1">Protein MJ0810</fullName>
    </recommendedName>
</protein>
<evidence type="ECO:0000255" key="1">
    <source>
        <dbReference type="HAMAP-Rule" id="MF_00645"/>
    </source>
</evidence>
<evidence type="ECO:0000305" key="2"/>
<proteinExistence type="inferred from homology"/>
<name>Y810_METJA</name>
<accession>Q58220</accession>
<reference key="1">
    <citation type="journal article" date="1996" name="Science">
        <title>Complete genome sequence of the methanogenic archaeon, Methanococcus jannaschii.</title>
        <authorList>
            <person name="Bult C.J."/>
            <person name="White O."/>
            <person name="Olsen G.J."/>
            <person name="Zhou L."/>
            <person name="Fleischmann R.D."/>
            <person name="Sutton G.G."/>
            <person name="Blake J.A."/>
            <person name="FitzGerald L.M."/>
            <person name="Clayton R.A."/>
            <person name="Gocayne J.D."/>
            <person name="Kerlavage A.R."/>
            <person name="Dougherty B.A."/>
            <person name="Tomb J.-F."/>
            <person name="Adams M.D."/>
            <person name="Reich C.I."/>
            <person name="Overbeek R."/>
            <person name="Kirkness E.F."/>
            <person name="Weinstock K.G."/>
            <person name="Merrick J.M."/>
            <person name="Glodek A."/>
            <person name="Scott J.L."/>
            <person name="Geoghagen N.S.M."/>
            <person name="Weidman J.F."/>
            <person name="Fuhrmann J.L."/>
            <person name="Nguyen D."/>
            <person name="Utterback T.R."/>
            <person name="Kelley J.M."/>
            <person name="Peterson J.D."/>
            <person name="Sadow P.W."/>
            <person name="Hanna M.C."/>
            <person name="Cotton M.D."/>
            <person name="Roberts K.M."/>
            <person name="Hurst M.A."/>
            <person name="Kaine B.P."/>
            <person name="Borodovsky M."/>
            <person name="Klenk H.-P."/>
            <person name="Fraser C.M."/>
            <person name="Smith H.O."/>
            <person name="Woese C.R."/>
            <person name="Venter J.C."/>
        </authorList>
    </citation>
    <scope>NUCLEOTIDE SEQUENCE [LARGE SCALE GENOMIC DNA]</scope>
    <source>
        <strain>ATCC 43067 / DSM 2661 / JAL-1 / JCM 10045 / NBRC 100440</strain>
    </source>
</reference>